<dbReference type="EMBL" id="FK749713">
    <property type="status" value="NOT_ANNOTATED_CDS"/>
    <property type="molecule type" value="mRNA"/>
</dbReference>
<dbReference type="EMBL" id="FK721810">
    <property type="status" value="NOT_ANNOTATED_CDS"/>
    <property type="molecule type" value="mRNA"/>
</dbReference>
<dbReference type="SMR" id="P0DN08"/>
<dbReference type="GO" id="GO:0005576">
    <property type="term" value="C:extracellular region"/>
    <property type="evidence" value="ECO:0007669"/>
    <property type="project" value="UniProtKB-SubCell"/>
</dbReference>
<dbReference type="GO" id="GO:0042151">
    <property type="term" value="C:nematocyst"/>
    <property type="evidence" value="ECO:0007669"/>
    <property type="project" value="UniProtKB-SubCell"/>
</dbReference>
<dbReference type="GO" id="GO:0004867">
    <property type="term" value="F:serine-type endopeptidase inhibitor activity"/>
    <property type="evidence" value="ECO:0007669"/>
    <property type="project" value="UniProtKB-KW"/>
</dbReference>
<dbReference type="CDD" id="cd22633">
    <property type="entry name" value="Kunitz_actitoxin-like"/>
    <property type="match status" value="1"/>
</dbReference>
<dbReference type="FunFam" id="4.10.410.10:FF:000021">
    <property type="entry name" value="Serine protease inhibitor, putative"/>
    <property type="match status" value="1"/>
</dbReference>
<dbReference type="Gene3D" id="4.10.410.10">
    <property type="entry name" value="Pancreatic trypsin inhibitor Kunitz domain"/>
    <property type="match status" value="1"/>
</dbReference>
<dbReference type="InterPro" id="IPR002223">
    <property type="entry name" value="Kunitz_BPTI"/>
</dbReference>
<dbReference type="InterPro" id="IPR036880">
    <property type="entry name" value="Kunitz_BPTI_sf"/>
</dbReference>
<dbReference type="InterPro" id="IPR020901">
    <property type="entry name" value="Prtase_inh_Kunz-CS"/>
</dbReference>
<dbReference type="InterPro" id="IPR050098">
    <property type="entry name" value="TFPI/VKTCI-like"/>
</dbReference>
<dbReference type="PANTHER" id="PTHR10083:SF374">
    <property type="entry name" value="BPTI_KUNITZ INHIBITOR DOMAIN-CONTAINING PROTEIN"/>
    <property type="match status" value="1"/>
</dbReference>
<dbReference type="PANTHER" id="PTHR10083">
    <property type="entry name" value="KUNITZ-TYPE PROTEASE INHIBITOR-RELATED"/>
    <property type="match status" value="1"/>
</dbReference>
<dbReference type="Pfam" id="PF00014">
    <property type="entry name" value="Kunitz_BPTI"/>
    <property type="match status" value="1"/>
</dbReference>
<dbReference type="PRINTS" id="PR00759">
    <property type="entry name" value="BASICPTASE"/>
</dbReference>
<dbReference type="SMART" id="SM00131">
    <property type="entry name" value="KU"/>
    <property type="match status" value="1"/>
</dbReference>
<dbReference type="SUPFAM" id="SSF57362">
    <property type="entry name" value="BPTI-like"/>
    <property type="match status" value="1"/>
</dbReference>
<dbReference type="PROSITE" id="PS00280">
    <property type="entry name" value="BPTI_KUNITZ_1"/>
    <property type="match status" value="1"/>
</dbReference>
<dbReference type="PROSITE" id="PS50279">
    <property type="entry name" value="BPTI_KUNITZ_2"/>
    <property type="match status" value="1"/>
</dbReference>
<evidence type="ECO:0000250" key="1"/>
<evidence type="ECO:0000250" key="2">
    <source>
        <dbReference type="UniProtKB" id="P10280"/>
    </source>
</evidence>
<evidence type="ECO:0000250" key="3">
    <source>
        <dbReference type="UniProtKB" id="Q9TWF8"/>
    </source>
</evidence>
<evidence type="ECO:0000255" key="4">
    <source>
        <dbReference type="PROSITE-ProRule" id="PRU00031"/>
    </source>
</evidence>
<evidence type="ECO:0000303" key="5">
    <source>
    </source>
</evidence>
<evidence type="ECO:0000303" key="6">
    <source>
    </source>
</evidence>
<evidence type="ECO:0000305" key="7"/>
<evidence type="ECO:0000305" key="8">
    <source>
    </source>
</evidence>
<accession>P0DN08</accession>
<proteinExistence type="inferred from homology"/>
<comment type="function">
    <text evidence="2 3">Serine protease inhibitor that inhibits both tissue and plasma kallikreins. Has hemolytic activity. Inhibits voltage-gated potassium channels (Kv).</text>
</comment>
<comment type="subcellular location">
    <subcellularLocation>
        <location evidence="7">Secreted</location>
    </subcellularLocation>
    <subcellularLocation>
        <location evidence="7">Nematocyst</location>
    </subcellularLocation>
</comment>
<comment type="similarity">
    <text evidence="7">Belongs to the venom Kunitz-type family. Sea anemone type 2 potassium channel toxin subfamily.</text>
</comment>
<comment type="caution">
    <text evidence="7">Opinions are divided on whether Anemonia viridis (Forsskal, 1775) and Anemonia sulcata (Pennant, 1777) are separate species.</text>
</comment>
<feature type="signal peptide" evidence="2">
    <location>
        <begin position="1"/>
        <end position="16"/>
    </location>
</feature>
<feature type="chain" id="PRO_0000433755" description="KappaPI-actitoxin-Avd3e">
    <location>
        <begin position="17"/>
        <end position="75"/>
    </location>
</feature>
<feature type="propeptide" id="PRO_0000433756" evidence="8">
    <location>
        <begin position="76"/>
        <end position="82"/>
    </location>
</feature>
<feature type="domain" description="BPTI/Kunitz inhibitor" evidence="4">
    <location>
        <begin position="21"/>
        <end position="71"/>
    </location>
</feature>
<feature type="site" description="Reactive bond" evidence="1">
    <location>
        <begin position="31"/>
        <end position="32"/>
    </location>
</feature>
<feature type="disulfide bond" evidence="4">
    <location>
        <begin position="21"/>
        <end position="71"/>
    </location>
</feature>
<feature type="disulfide bond" evidence="4">
    <location>
        <begin position="30"/>
        <end position="54"/>
    </location>
</feature>
<feature type="disulfide bond" evidence="4">
    <location>
        <begin position="46"/>
        <end position="67"/>
    </location>
</feature>
<name>VKT53_ANEVI</name>
<keyword id="KW-1015">Disulfide bond</keyword>
<keyword id="KW-0166">Nematocyst</keyword>
<keyword id="KW-0646">Protease inhibitor</keyword>
<keyword id="KW-0964">Secreted</keyword>
<keyword id="KW-0722">Serine protease inhibitor</keyword>
<keyword id="KW-0732">Signal</keyword>
<reference key="1">
    <citation type="journal article" date="2009" name="BMC Genomics">
        <title>Comprehensive EST analysis of the symbiotic sea anemone, Anemonia viridis.</title>
        <authorList>
            <person name="Sabourault C."/>
            <person name="Ganot P."/>
            <person name="Deleury E."/>
            <person name="Allemand D."/>
            <person name="Furla P."/>
        </authorList>
    </citation>
    <scope>NUCLEOTIDE SEQUENCE [MRNA]</scope>
</reference>
<reference key="2">
    <citation type="journal article" date="2011" name="BMC Genomics">
        <title>The mining of toxin-like polypeptides from EST database by single residue distribution analysis.</title>
        <authorList>
            <person name="Kozlov S."/>
            <person name="Grishin E."/>
        </authorList>
    </citation>
    <scope>NOMENCLATURE</scope>
</reference>
<reference key="3">
    <citation type="journal article" date="2012" name="Toxicon">
        <title>Development of a rational nomenclature for naming peptide and protein toxins from sea anemones.</title>
        <authorList>
            <person name="Oliveira J.S."/>
            <person name="Fuentes-Silva D."/>
            <person name="King G.F."/>
        </authorList>
    </citation>
    <scope>NOMENCLATURE</scope>
</reference>
<protein>
    <recommendedName>
        <fullName evidence="6">KappaPI-actitoxin-Avd3e</fullName>
        <shortName evidence="6">KappaPI-AITX-Avd3e</shortName>
    </recommendedName>
    <alternativeName>
        <fullName evidence="5">Proteinase inhibitor 5 III</fullName>
        <shortName evidence="6">SA5 III</shortName>
    </alternativeName>
</protein>
<organism>
    <name type="scientific">Anemonia viridis</name>
    <name type="common">Snakelocks anemone</name>
    <dbReference type="NCBI Taxonomy" id="51769"/>
    <lineage>
        <taxon>Eukaryota</taxon>
        <taxon>Metazoa</taxon>
        <taxon>Cnidaria</taxon>
        <taxon>Anthozoa</taxon>
        <taxon>Hexacorallia</taxon>
        <taxon>Actiniaria</taxon>
        <taxon>Actiniidae</taxon>
        <taxon>Anemonia</taxon>
    </lineage>
</organism>
<sequence>MVFLLCFFLVADVSYGINGDCELPKVVGPCRARFPRYYYNSSSKRCEKFIYGGCGGNANNFHTLEECEKVCGVRSRDSPKEN</sequence>